<sequence>MAFTPFPPRQPTASARLPLTLMTLDDWALATITGADSEKYMQGQVTADVSQMAEDQHLLAAHCDAKGKMWSNLRLFRDGDGFAWIERRSVREPQLTELKKYAVFSKVTIAPDDERVLLGVAGFQARAALANLFSELPSKEKQVVKEGATTLLWFEHPAERFLIVTDEATANMLTDKLRGEAELNNSQQWLALNIEAGFPVIDAANSGQFIPQATNLQALGGISFKKGCYTGQEMVARAKFRGANKRALWLLAGSASRLPEAGEDLELKMGENWRRTGTVLAAVKLEDGQVVVQVVMNNDMEPDSIFRVRDDANTLHIEPLPYSLEE</sequence>
<gene>
    <name evidence="1" type="primary">ygfZ</name>
    <name type="ordered locus">SFV_2946</name>
</gene>
<comment type="function">
    <text evidence="1">Folate-binding protein involved in regulating the level of ATP-DnaA and in the modification of some tRNAs. It is probably a key factor in regulatory networks that act via tRNA modification, such as initiation of chromosomal replication.</text>
</comment>
<comment type="subcellular location">
    <subcellularLocation>
        <location evidence="1">Cytoplasm</location>
    </subcellularLocation>
</comment>
<comment type="similarity">
    <text evidence="1">Belongs to the tRNA-modifying YgfZ family.</text>
</comment>
<protein>
    <recommendedName>
        <fullName evidence="1">tRNA-modifying protein YgfZ</fullName>
    </recommendedName>
</protein>
<name>YGFZ_SHIF8</name>
<dbReference type="EMBL" id="CP000266">
    <property type="protein sequence ID" value="ABF05016.1"/>
    <property type="molecule type" value="Genomic_DNA"/>
</dbReference>
<dbReference type="RefSeq" id="WP_000886062.1">
    <property type="nucleotide sequence ID" value="NC_008258.1"/>
</dbReference>
<dbReference type="SMR" id="Q0T0Z9"/>
<dbReference type="GeneID" id="75205265"/>
<dbReference type="KEGG" id="sfv:SFV_2946"/>
<dbReference type="HOGENOM" id="CLU_007884_6_1_6"/>
<dbReference type="Proteomes" id="UP000000659">
    <property type="component" value="Chromosome"/>
</dbReference>
<dbReference type="GO" id="GO:0005737">
    <property type="term" value="C:cytoplasm"/>
    <property type="evidence" value="ECO:0007669"/>
    <property type="project" value="UniProtKB-SubCell"/>
</dbReference>
<dbReference type="GO" id="GO:0005542">
    <property type="term" value="F:folic acid binding"/>
    <property type="evidence" value="ECO:0007669"/>
    <property type="project" value="UniProtKB-UniRule"/>
</dbReference>
<dbReference type="GO" id="GO:0016226">
    <property type="term" value="P:iron-sulfur cluster assembly"/>
    <property type="evidence" value="ECO:0007669"/>
    <property type="project" value="TreeGrafter"/>
</dbReference>
<dbReference type="GO" id="GO:0009451">
    <property type="term" value="P:RNA modification"/>
    <property type="evidence" value="ECO:0007669"/>
    <property type="project" value="InterPro"/>
</dbReference>
<dbReference type="GO" id="GO:0008033">
    <property type="term" value="P:tRNA processing"/>
    <property type="evidence" value="ECO:0007669"/>
    <property type="project" value="UniProtKB-UniRule"/>
</dbReference>
<dbReference type="FunFam" id="2.40.30.160:FF:000001">
    <property type="entry name" value="tRNA-modifying protein YgfZ"/>
    <property type="match status" value="1"/>
</dbReference>
<dbReference type="FunFam" id="3.30.70.1400:FF:000002">
    <property type="entry name" value="tRNA-modifying protein YgfZ"/>
    <property type="match status" value="1"/>
</dbReference>
<dbReference type="FunFam" id="3.30.70.1630:FF:000001">
    <property type="entry name" value="tRNA-modifying protein YgfZ"/>
    <property type="match status" value="1"/>
</dbReference>
<dbReference type="Gene3D" id="2.40.30.160">
    <property type="match status" value="1"/>
</dbReference>
<dbReference type="Gene3D" id="3.30.70.1630">
    <property type="match status" value="1"/>
</dbReference>
<dbReference type="Gene3D" id="3.30.70.1400">
    <property type="entry name" value="Aminomethyltransferase beta-barrel domains"/>
    <property type="match status" value="1"/>
</dbReference>
<dbReference type="HAMAP" id="MF_01175">
    <property type="entry name" value="tRNA_modifying_YgfZ"/>
    <property type="match status" value="1"/>
</dbReference>
<dbReference type="InterPro" id="IPR006222">
    <property type="entry name" value="GCV_T_N"/>
</dbReference>
<dbReference type="InterPro" id="IPR029043">
    <property type="entry name" value="GcvT/YgfZ_C"/>
</dbReference>
<dbReference type="InterPro" id="IPR023758">
    <property type="entry name" value="tRNA-modifying_YgfZ"/>
</dbReference>
<dbReference type="InterPro" id="IPR045179">
    <property type="entry name" value="YgfZ/GcvT"/>
</dbReference>
<dbReference type="InterPro" id="IPR017703">
    <property type="entry name" value="YgfZ/GcvT_CS"/>
</dbReference>
<dbReference type="InterPro" id="IPR048451">
    <property type="entry name" value="YgfZ_barrel"/>
</dbReference>
<dbReference type="NCBIfam" id="NF007110">
    <property type="entry name" value="PRK09559.1"/>
    <property type="match status" value="1"/>
</dbReference>
<dbReference type="NCBIfam" id="TIGR03317">
    <property type="entry name" value="ygfZ_signature"/>
    <property type="match status" value="1"/>
</dbReference>
<dbReference type="PANTHER" id="PTHR22602">
    <property type="entry name" value="TRANSFERASE CAF17, MITOCHONDRIAL-RELATED"/>
    <property type="match status" value="1"/>
</dbReference>
<dbReference type="PANTHER" id="PTHR22602:SF0">
    <property type="entry name" value="TRANSFERASE CAF17, MITOCHONDRIAL-RELATED"/>
    <property type="match status" value="1"/>
</dbReference>
<dbReference type="Pfam" id="PF01571">
    <property type="entry name" value="GCV_T"/>
    <property type="match status" value="1"/>
</dbReference>
<dbReference type="Pfam" id="PF21130">
    <property type="entry name" value="YgfZ_barrel"/>
    <property type="match status" value="1"/>
</dbReference>
<dbReference type="SUPFAM" id="SSF101790">
    <property type="entry name" value="Aminomethyltransferase beta-barrel domain"/>
    <property type="match status" value="1"/>
</dbReference>
<dbReference type="SUPFAM" id="SSF103025">
    <property type="entry name" value="Folate-binding domain"/>
    <property type="match status" value="1"/>
</dbReference>
<accession>Q0T0Z9</accession>
<reference key="1">
    <citation type="journal article" date="2006" name="BMC Genomics">
        <title>Complete genome sequence of Shigella flexneri 5b and comparison with Shigella flexneri 2a.</title>
        <authorList>
            <person name="Nie H."/>
            <person name="Yang F."/>
            <person name="Zhang X."/>
            <person name="Yang J."/>
            <person name="Chen L."/>
            <person name="Wang J."/>
            <person name="Xiong Z."/>
            <person name="Peng J."/>
            <person name="Sun L."/>
            <person name="Dong J."/>
            <person name="Xue Y."/>
            <person name="Xu X."/>
            <person name="Chen S."/>
            <person name="Yao Z."/>
            <person name="Shen Y."/>
            <person name="Jin Q."/>
        </authorList>
    </citation>
    <scope>NUCLEOTIDE SEQUENCE [LARGE SCALE GENOMIC DNA]</scope>
    <source>
        <strain>8401</strain>
    </source>
</reference>
<evidence type="ECO:0000255" key="1">
    <source>
        <dbReference type="HAMAP-Rule" id="MF_01175"/>
    </source>
</evidence>
<feature type="chain" id="PRO_1000065778" description="tRNA-modifying protein YgfZ">
    <location>
        <begin position="1"/>
        <end position="326"/>
    </location>
</feature>
<feature type="binding site" evidence="1">
    <location>
        <position position="27"/>
    </location>
    <ligand>
        <name>folate</name>
        <dbReference type="ChEBI" id="CHEBI:62501"/>
    </ligand>
</feature>
<feature type="binding site" evidence="1">
    <location>
        <position position="189"/>
    </location>
    <ligand>
        <name>folate</name>
        <dbReference type="ChEBI" id="CHEBI:62501"/>
    </ligand>
</feature>
<keyword id="KW-0963">Cytoplasm</keyword>
<keyword id="KW-0290">Folate-binding</keyword>
<keyword id="KW-0819">tRNA processing</keyword>
<organism>
    <name type="scientific">Shigella flexneri serotype 5b (strain 8401)</name>
    <dbReference type="NCBI Taxonomy" id="373384"/>
    <lineage>
        <taxon>Bacteria</taxon>
        <taxon>Pseudomonadati</taxon>
        <taxon>Pseudomonadota</taxon>
        <taxon>Gammaproteobacteria</taxon>
        <taxon>Enterobacterales</taxon>
        <taxon>Enterobacteriaceae</taxon>
        <taxon>Shigella</taxon>
    </lineage>
</organism>
<proteinExistence type="inferred from homology"/>